<comment type="function">
    <text evidence="1">The RuvA-RuvB-RuvC complex processes Holliday junction (HJ) DNA during genetic recombination and DNA repair, while the RuvA-RuvB complex plays an important role in the rescue of blocked DNA replication forks via replication fork reversal (RFR). RuvA specifically binds to HJ cruciform DNA, conferring on it an open structure. The RuvB hexamer acts as an ATP-dependent pump, pulling dsDNA into and through the RuvAB complex. HJ branch migration allows RuvC to scan DNA until it finds its consensus sequence, where it cleaves and resolves the cruciform DNA.</text>
</comment>
<comment type="subunit">
    <text evidence="1">Homotetramer. Forms an RuvA(8)-RuvB(12)-Holliday junction (HJ) complex. HJ DNA is sandwiched between 2 RuvA tetramers; dsDNA enters through RuvA and exits via RuvB. An RuvB hexamer assembles on each DNA strand where it exits the tetramer. Each RuvB hexamer is contacted by two RuvA subunits (via domain III) on 2 adjacent RuvB subunits; this complex drives branch migration. In the full resolvosome a probable DNA-RuvA(4)-RuvB(12)-RuvC(2) complex forms which resolves the HJ.</text>
</comment>
<comment type="subcellular location">
    <subcellularLocation>
        <location evidence="1">Cytoplasm</location>
    </subcellularLocation>
</comment>
<comment type="domain">
    <text evidence="1">Has three domains with a flexible linker between the domains II and III and assumes an 'L' shape. Domain III is highly mobile and contacts RuvB.</text>
</comment>
<comment type="similarity">
    <text evidence="1">Belongs to the RuvA family.</text>
</comment>
<gene>
    <name evidence="1" type="primary">ruvA</name>
    <name type="ordered locus">Moth_1701</name>
</gene>
<proteinExistence type="inferred from homology"/>
<accession>Q2RHT6</accession>
<feature type="chain" id="PRO_1000002486" description="Holliday junction branch migration complex subunit RuvA">
    <location>
        <begin position="1"/>
        <end position="202"/>
    </location>
</feature>
<feature type="region of interest" description="Domain I" evidence="1">
    <location>
        <begin position="1"/>
        <end position="62"/>
    </location>
</feature>
<feature type="region of interest" description="Domain II" evidence="1">
    <location>
        <begin position="63"/>
        <end position="141"/>
    </location>
</feature>
<feature type="region of interest" description="Flexible linker" evidence="1">
    <location>
        <begin position="141"/>
        <end position="145"/>
    </location>
</feature>
<feature type="region of interest" description="Domain III" evidence="1">
    <location>
        <begin position="146"/>
        <end position="202"/>
    </location>
</feature>
<evidence type="ECO:0000255" key="1">
    <source>
        <dbReference type="HAMAP-Rule" id="MF_00031"/>
    </source>
</evidence>
<sequence length="202" mass="21230">MIGYLRGRLHLVTPEGILLETGGIGWLVRTVTNRSWPAPGTEIAVYTQLVVREDAMELYGFTRPEELHLFTLLRGVNGIGPRGALQILGAAKPEQLSRAIAAGDSAFLTALPGIGAKKAQRLLLELKDAVLKSGLVDGTETEAIPAGGGDNDEALAALLALGYSREEIGPILARVRQELGNAAPTTAVLQAVLKTFGRGGGD</sequence>
<reference key="1">
    <citation type="journal article" date="2008" name="Environ. Microbiol.">
        <title>The complete genome sequence of Moorella thermoacetica (f. Clostridium thermoaceticum).</title>
        <authorList>
            <person name="Pierce E."/>
            <person name="Xie G."/>
            <person name="Barabote R.D."/>
            <person name="Saunders E."/>
            <person name="Han C.S."/>
            <person name="Detter J.C."/>
            <person name="Richardson P."/>
            <person name="Brettin T.S."/>
            <person name="Das A."/>
            <person name="Ljungdahl L.G."/>
            <person name="Ragsdale S.W."/>
        </authorList>
    </citation>
    <scope>NUCLEOTIDE SEQUENCE [LARGE SCALE GENOMIC DNA]</scope>
    <source>
        <strain>ATCC 39073 / JCM 9320</strain>
    </source>
</reference>
<protein>
    <recommendedName>
        <fullName evidence="1">Holliday junction branch migration complex subunit RuvA</fullName>
    </recommendedName>
</protein>
<organism>
    <name type="scientific">Moorella thermoacetica (strain ATCC 39073 / JCM 9320)</name>
    <dbReference type="NCBI Taxonomy" id="264732"/>
    <lineage>
        <taxon>Bacteria</taxon>
        <taxon>Bacillati</taxon>
        <taxon>Bacillota</taxon>
        <taxon>Clostridia</taxon>
        <taxon>Moorellales</taxon>
        <taxon>Moorellaceae</taxon>
        <taxon>Moorella</taxon>
    </lineage>
</organism>
<dbReference type="EMBL" id="CP000232">
    <property type="protein sequence ID" value="ABC20003.1"/>
    <property type="molecule type" value="Genomic_DNA"/>
</dbReference>
<dbReference type="RefSeq" id="YP_430546.1">
    <property type="nucleotide sequence ID" value="NC_007644.1"/>
</dbReference>
<dbReference type="SMR" id="Q2RHT6"/>
<dbReference type="STRING" id="264732.Moth_1701"/>
<dbReference type="EnsemblBacteria" id="ABC20003">
    <property type="protein sequence ID" value="ABC20003"/>
    <property type="gene ID" value="Moth_1701"/>
</dbReference>
<dbReference type="KEGG" id="mta:Moth_1701"/>
<dbReference type="PATRIC" id="fig|264732.11.peg.1842"/>
<dbReference type="eggNOG" id="COG0632">
    <property type="taxonomic scope" value="Bacteria"/>
</dbReference>
<dbReference type="HOGENOM" id="CLU_087936_2_1_9"/>
<dbReference type="OrthoDB" id="5293449at2"/>
<dbReference type="GO" id="GO:0005737">
    <property type="term" value="C:cytoplasm"/>
    <property type="evidence" value="ECO:0007669"/>
    <property type="project" value="UniProtKB-SubCell"/>
</dbReference>
<dbReference type="GO" id="GO:0009379">
    <property type="term" value="C:Holliday junction helicase complex"/>
    <property type="evidence" value="ECO:0007669"/>
    <property type="project" value="InterPro"/>
</dbReference>
<dbReference type="GO" id="GO:0048476">
    <property type="term" value="C:Holliday junction resolvase complex"/>
    <property type="evidence" value="ECO:0007669"/>
    <property type="project" value="UniProtKB-UniRule"/>
</dbReference>
<dbReference type="GO" id="GO:0005524">
    <property type="term" value="F:ATP binding"/>
    <property type="evidence" value="ECO:0007669"/>
    <property type="project" value="InterPro"/>
</dbReference>
<dbReference type="GO" id="GO:0000400">
    <property type="term" value="F:four-way junction DNA binding"/>
    <property type="evidence" value="ECO:0007669"/>
    <property type="project" value="UniProtKB-UniRule"/>
</dbReference>
<dbReference type="GO" id="GO:0009378">
    <property type="term" value="F:four-way junction helicase activity"/>
    <property type="evidence" value="ECO:0007669"/>
    <property type="project" value="InterPro"/>
</dbReference>
<dbReference type="GO" id="GO:0006310">
    <property type="term" value="P:DNA recombination"/>
    <property type="evidence" value="ECO:0007669"/>
    <property type="project" value="UniProtKB-UniRule"/>
</dbReference>
<dbReference type="GO" id="GO:0006281">
    <property type="term" value="P:DNA repair"/>
    <property type="evidence" value="ECO:0007669"/>
    <property type="project" value="UniProtKB-UniRule"/>
</dbReference>
<dbReference type="Gene3D" id="1.10.150.20">
    <property type="entry name" value="5' to 3' exonuclease, C-terminal subdomain"/>
    <property type="match status" value="1"/>
</dbReference>
<dbReference type="Gene3D" id="2.40.50.140">
    <property type="entry name" value="Nucleic acid-binding proteins"/>
    <property type="match status" value="1"/>
</dbReference>
<dbReference type="HAMAP" id="MF_00031">
    <property type="entry name" value="DNA_HJ_migration_RuvA"/>
    <property type="match status" value="1"/>
</dbReference>
<dbReference type="InterPro" id="IPR013849">
    <property type="entry name" value="DNA_helicase_Holl-junc_RuvA_I"/>
</dbReference>
<dbReference type="InterPro" id="IPR003583">
    <property type="entry name" value="Hlx-hairpin-Hlx_DNA-bd_motif"/>
</dbReference>
<dbReference type="InterPro" id="IPR012340">
    <property type="entry name" value="NA-bd_OB-fold"/>
</dbReference>
<dbReference type="InterPro" id="IPR000085">
    <property type="entry name" value="RuvA"/>
</dbReference>
<dbReference type="InterPro" id="IPR010994">
    <property type="entry name" value="RuvA_2-like"/>
</dbReference>
<dbReference type="InterPro" id="IPR011114">
    <property type="entry name" value="RuvA_C"/>
</dbReference>
<dbReference type="NCBIfam" id="TIGR00084">
    <property type="entry name" value="ruvA"/>
    <property type="match status" value="1"/>
</dbReference>
<dbReference type="Pfam" id="PF14520">
    <property type="entry name" value="HHH_5"/>
    <property type="match status" value="1"/>
</dbReference>
<dbReference type="Pfam" id="PF07499">
    <property type="entry name" value="RuvA_C"/>
    <property type="match status" value="1"/>
</dbReference>
<dbReference type="Pfam" id="PF01330">
    <property type="entry name" value="RuvA_N"/>
    <property type="match status" value="1"/>
</dbReference>
<dbReference type="SMART" id="SM00278">
    <property type="entry name" value="HhH1"/>
    <property type="match status" value="2"/>
</dbReference>
<dbReference type="SUPFAM" id="SSF50249">
    <property type="entry name" value="Nucleic acid-binding proteins"/>
    <property type="match status" value="1"/>
</dbReference>
<dbReference type="SUPFAM" id="SSF47781">
    <property type="entry name" value="RuvA domain 2-like"/>
    <property type="match status" value="1"/>
</dbReference>
<name>RUVA_MOOTA</name>
<keyword id="KW-0963">Cytoplasm</keyword>
<keyword id="KW-0227">DNA damage</keyword>
<keyword id="KW-0233">DNA recombination</keyword>
<keyword id="KW-0234">DNA repair</keyword>
<keyword id="KW-0238">DNA-binding</keyword>